<feature type="chain" id="PRO_0000297917" description="AP2-like ethylene-responsive transcription factor AIL6">
    <location>
        <begin position="1"/>
        <end position="581"/>
    </location>
</feature>
<feature type="DNA-binding region" description="AP2/ERF 1" evidence="2">
    <location>
        <begin position="268"/>
        <end position="331"/>
    </location>
</feature>
<feature type="DNA-binding region" description="AP2/ERF 2" evidence="2">
    <location>
        <begin position="367"/>
        <end position="425"/>
    </location>
</feature>
<feature type="region of interest" description="Disordered" evidence="3">
    <location>
        <begin position="105"/>
        <end position="132"/>
    </location>
</feature>
<feature type="region of interest" description="Disordered" evidence="3">
    <location>
        <begin position="205"/>
        <end position="240"/>
    </location>
</feature>
<feature type="compositionally biased region" description="Low complexity" evidence="3">
    <location>
        <begin position="108"/>
        <end position="122"/>
    </location>
</feature>
<feature type="compositionally biased region" description="Low complexity" evidence="3">
    <location>
        <begin position="218"/>
        <end position="232"/>
    </location>
</feature>
<feature type="splice variant" id="VSP_027406" description="In isoform 2." evidence="7">
    <original>Q</original>
    <variation>QVYL</variation>
    <location>
        <position position="301"/>
    </location>
</feature>
<keyword id="KW-0010">Activator</keyword>
<keyword id="KW-0025">Alternative splicing</keyword>
<keyword id="KW-0238">DNA-binding</keyword>
<keyword id="KW-0936">Ethylene signaling pathway</keyword>
<keyword id="KW-0539">Nucleus</keyword>
<keyword id="KW-1185">Reference proteome</keyword>
<keyword id="KW-0677">Repeat</keyword>
<keyword id="KW-0804">Transcription</keyword>
<keyword id="KW-0805">Transcription regulation</keyword>
<accession>Q52QU2</accession>
<accession>Q6PQQ5</accession>
<accession>Q9LXA3</accession>
<protein>
    <recommendedName>
        <fullName evidence="6">AP2-like ethylene-responsive transcription factor AIL6</fullName>
    </recommendedName>
    <alternativeName>
        <fullName evidence="6">Protein AINTEGUMENTA-LIKE 6</fullName>
    </alternativeName>
</protein>
<comment type="function">
    <text evidence="1">Probably acts as a transcriptional activator. Binds to the GCC-box pathogenesis-related promoter element. May be involved in the regulation of gene expression by stress factors and by components of stress signal transduction pathways.</text>
</comment>
<comment type="subcellular location">
    <subcellularLocation>
        <location evidence="8">Nucleus</location>
    </subcellularLocation>
</comment>
<comment type="alternative products">
    <event type="alternative splicing"/>
    <isoform>
        <id>Q52QU2-1</id>
        <name>1</name>
        <sequence type="displayed"/>
    </isoform>
    <isoform>
        <id>Q52QU2-2</id>
        <name>2</name>
        <sequence type="described" ref="VSP_027406"/>
    </isoform>
</comment>
<comment type="tissue specificity">
    <text evidence="4 5">Expressed in roots, seedlings, hypocotyl, inflorescence, siliques, and pistils. Also detected at low levels in leaves.</text>
</comment>
<comment type="developmental stage">
    <text evidence="4">Detected in inflorescence and youg floral mersitems, and in stem procambial cells. In floral mersitems, mostly expressed in the central dome. Disappears progressively from sepal primordia, but accumulates in second, third and fourth whorl organ primordia. Later, confined to occasional patches in stamens and in petal before disparearing progressively from flowers.</text>
</comment>
<comment type="similarity">
    <text evidence="8">Belongs to the AP2/ERF transcription factor family. AP2 subfamily.</text>
</comment>
<comment type="sequence caution" evidence="8">
    <conflict type="erroneous gene model prediction">
        <sequence resource="EMBL-CDS" id="CAB89392"/>
    </conflict>
</comment>
<name>AIL6_ARATH</name>
<organism>
    <name type="scientific">Arabidopsis thaliana</name>
    <name type="common">Mouse-ear cress</name>
    <dbReference type="NCBI Taxonomy" id="3702"/>
    <lineage>
        <taxon>Eukaryota</taxon>
        <taxon>Viridiplantae</taxon>
        <taxon>Streptophyta</taxon>
        <taxon>Embryophyta</taxon>
        <taxon>Tracheophyta</taxon>
        <taxon>Spermatophyta</taxon>
        <taxon>Magnoliopsida</taxon>
        <taxon>eudicotyledons</taxon>
        <taxon>Gunneridae</taxon>
        <taxon>Pentapetalae</taxon>
        <taxon>rosids</taxon>
        <taxon>malvids</taxon>
        <taxon>Brassicales</taxon>
        <taxon>Brassicaceae</taxon>
        <taxon>Camelineae</taxon>
        <taxon>Arabidopsis</taxon>
    </lineage>
</organism>
<reference key="1">
    <citation type="journal article" date="2005" name="Plant Mol. Biol.">
        <title>An annotation update via cDNA sequence analysis and comprehensive profiling of developmental, hormonal or environmental responsiveness of the Arabidopsis AP2/EREBP transcription factor gene family.</title>
        <authorList>
            <person name="Feng J.-X."/>
            <person name="Liu D."/>
            <person name="Pan Y."/>
            <person name="Gong W."/>
            <person name="Ma L.-G."/>
            <person name="Luo J.-C."/>
            <person name="Deng X.-W."/>
            <person name="Zhu Y.-X."/>
        </authorList>
    </citation>
    <scope>NUCLEOTIDE SEQUENCE [MRNA] (ISOFORM 1)</scope>
    <scope>TISSUE SPECIFICITY</scope>
    <source>
        <strain>cv. Columbia</strain>
    </source>
</reference>
<reference key="2">
    <citation type="journal article" date="2000" name="Nature">
        <title>Sequence and analysis of chromosome 5 of the plant Arabidopsis thaliana.</title>
        <authorList>
            <person name="Tabata S."/>
            <person name="Kaneko T."/>
            <person name="Nakamura Y."/>
            <person name="Kotani H."/>
            <person name="Kato T."/>
            <person name="Asamizu E."/>
            <person name="Miyajima N."/>
            <person name="Sasamoto S."/>
            <person name="Kimura T."/>
            <person name="Hosouchi T."/>
            <person name="Kawashima K."/>
            <person name="Kohara M."/>
            <person name="Matsumoto M."/>
            <person name="Matsuno A."/>
            <person name="Muraki A."/>
            <person name="Nakayama S."/>
            <person name="Nakazaki N."/>
            <person name="Naruo K."/>
            <person name="Okumura S."/>
            <person name="Shinpo S."/>
            <person name="Takeuchi C."/>
            <person name="Wada T."/>
            <person name="Watanabe A."/>
            <person name="Yamada M."/>
            <person name="Yasuda M."/>
            <person name="Sato S."/>
            <person name="de la Bastide M."/>
            <person name="Huang E."/>
            <person name="Spiegel L."/>
            <person name="Gnoj L."/>
            <person name="O'Shaughnessy A."/>
            <person name="Preston R."/>
            <person name="Habermann K."/>
            <person name="Murray J."/>
            <person name="Johnson D."/>
            <person name="Rohlfing T."/>
            <person name="Nelson J."/>
            <person name="Stoneking T."/>
            <person name="Pepin K."/>
            <person name="Spieth J."/>
            <person name="Sekhon M."/>
            <person name="Armstrong J."/>
            <person name="Becker M."/>
            <person name="Belter E."/>
            <person name="Cordum H."/>
            <person name="Cordes M."/>
            <person name="Courtney L."/>
            <person name="Courtney W."/>
            <person name="Dante M."/>
            <person name="Du H."/>
            <person name="Edwards J."/>
            <person name="Fryman J."/>
            <person name="Haakensen B."/>
            <person name="Lamar E."/>
            <person name="Latreille P."/>
            <person name="Leonard S."/>
            <person name="Meyer R."/>
            <person name="Mulvaney E."/>
            <person name="Ozersky P."/>
            <person name="Riley A."/>
            <person name="Strowmatt C."/>
            <person name="Wagner-McPherson C."/>
            <person name="Wollam A."/>
            <person name="Yoakum M."/>
            <person name="Bell M."/>
            <person name="Dedhia N."/>
            <person name="Parnell L."/>
            <person name="Shah R."/>
            <person name="Rodriguez M."/>
            <person name="Hoon See L."/>
            <person name="Vil D."/>
            <person name="Baker J."/>
            <person name="Kirchoff K."/>
            <person name="Toth K."/>
            <person name="King L."/>
            <person name="Bahret A."/>
            <person name="Miller B."/>
            <person name="Marra M.A."/>
            <person name="Martienssen R."/>
            <person name="McCombie W.R."/>
            <person name="Wilson R.K."/>
            <person name="Murphy G."/>
            <person name="Bancroft I."/>
            <person name="Volckaert G."/>
            <person name="Wambutt R."/>
            <person name="Duesterhoeft A."/>
            <person name="Stiekema W."/>
            <person name="Pohl T."/>
            <person name="Entian K.-D."/>
            <person name="Terryn N."/>
            <person name="Hartley N."/>
            <person name="Bent E."/>
            <person name="Johnson S."/>
            <person name="Langham S.-A."/>
            <person name="McCullagh B."/>
            <person name="Robben J."/>
            <person name="Grymonprez B."/>
            <person name="Zimmermann W."/>
            <person name="Ramsperger U."/>
            <person name="Wedler H."/>
            <person name="Balke K."/>
            <person name="Wedler E."/>
            <person name="Peters S."/>
            <person name="van Staveren M."/>
            <person name="Dirkse W."/>
            <person name="Mooijman P."/>
            <person name="Klein Lankhorst R."/>
            <person name="Weitzenegger T."/>
            <person name="Bothe G."/>
            <person name="Rose M."/>
            <person name="Hauf J."/>
            <person name="Berneiser S."/>
            <person name="Hempel S."/>
            <person name="Feldpausch M."/>
            <person name="Lamberth S."/>
            <person name="Villarroel R."/>
            <person name="Gielen J."/>
            <person name="Ardiles W."/>
            <person name="Bents O."/>
            <person name="Lemcke K."/>
            <person name="Kolesov G."/>
            <person name="Mayer K.F.X."/>
            <person name="Rudd S."/>
            <person name="Schoof H."/>
            <person name="Schueller C."/>
            <person name="Zaccaria P."/>
            <person name="Mewes H.-W."/>
            <person name="Bevan M."/>
            <person name="Fransz P.F."/>
        </authorList>
    </citation>
    <scope>NUCLEOTIDE SEQUENCE [LARGE SCALE GENOMIC DNA]</scope>
    <source>
        <strain>cv. Columbia</strain>
    </source>
</reference>
<reference key="3">
    <citation type="journal article" date="2017" name="Plant J.">
        <title>Araport11: a complete reannotation of the Arabidopsis thaliana reference genome.</title>
        <authorList>
            <person name="Cheng C.Y."/>
            <person name="Krishnakumar V."/>
            <person name="Chan A.P."/>
            <person name="Thibaud-Nissen F."/>
            <person name="Schobel S."/>
            <person name="Town C.D."/>
        </authorList>
    </citation>
    <scope>GENOME REANNOTATION</scope>
    <source>
        <strain>cv. Columbia</strain>
    </source>
</reference>
<reference key="4">
    <citation type="submission" date="2004-03" db="EMBL/GenBank/DDBJ databases">
        <title>Molecular cloning, expression, phylogenetic and functional characterization of the Arabidopsis AP2/EREBP transcription factor family.</title>
        <authorList>
            <person name="Pan Y."/>
            <person name="Gong W."/>
            <person name="Liu D."/>
            <person name="Fu Q."/>
            <person name="Mei W.-Q."/>
            <person name="Song W.-Q."/>
            <person name="Ma L.-G."/>
            <person name="Luo J.-C."/>
            <person name="Deng X.-W."/>
            <person name="Zhu Y.-X."/>
        </authorList>
    </citation>
    <scope>NUCLEOTIDE SEQUENCE [MRNA] OF 16-581 (ISOFORM 2)</scope>
</reference>
<reference key="5">
    <citation type="journal article" date="2005" name="Plant Mol. Biol.">
        <title>AINTEGUMENTA-like (AIL) genes are expressed in young tissues and may specify meristematic or division-competent states.</title>
        <authorList>
            <person name="Nole-Wilson S."/>
            <person name="Tranby T.L."/>
            <person name="Krizek B.A."/>
        </authorList>
    </citation>
    <scope>TISSUE SPECIFICITY</scope>
    <scope>DEVELOPMENTAL STAGE</scope>
</reference>
<reference key="6">
    <citation type="journal article" date="2006" name="Plant Physiol.">
        <title>Genome-wide analysis of the ERF gene family in Arabidopsis and rice.</title>
        <authorList>
            <person name="Nakano T."/>
            <person name="Suzuki K."/>
            <person name="Fujimura T."/>
            <person name="Shinshi H."/>
        </authorList>
    </citation>
    <scope>GENE FAMILY</scope>
    <scope>NOMENCLATURE</scope>
</reference>
<gene>
    <name evidence="6" type="primary">AIL6</name>
    <name evidence="9" type="ordered locus">At5g10510</name>
    <name evidence="10" type="ORF">F12B17.140</name>
</gene>
<dbReference type="EMBL" id="AY974197">
    <property type="protein sequence ID" value="AAX89123.1"/>
    <property type="molecule type" value="mRNA"/>
</dbReference>
<dbReference type="EMBL" id="AL353995">
    <property type="protein sequence ID" value="CAB89392.1"/>
    <property type="status" value="ALT_SEQ"/>
    <property type="molecule type" value="Genomic_DNA"/>
</dbReference>
<dbReference type="EMBL" id="CP002688">
    <property type="protein sequence ID" value="ANM69603.1"/>
    <property type="molecule type" value="Genomic_DNA"/>
</dbReference>
<dbReference type="EMBL" id="CP002688">
    <property type="protein sequence ID" value="ANM69605.1"/>
    <property type="molecule type" value="Genomic_DNA"/>
</dbReference>
<dbReference type="EMBL" id="AY585683">
    <property type="protein sequence ID" value="AAS97940.1"/>
    <property type="molecule type" value="mRNA"/>
</dbReference>
<dbReference type="PIR" id="T49988">
    <property type="entry name" value="T49988"/>
</dbReference>
<dbReference type="RefSeq" id="NP_001331268.1">
    <molecule id="Q52QU2-2"/>
    <property type="nucleotide sequence ID" value="NM_001343118.1"/>
</dbReference>
<dbReference type="RefSeq" id="NP_001331270.1">
    <molecule id="Q52QU2-2"/>
    <property type="nucleotide sequence ID" value="NM_001343116.1"/>
</dbReference>
<dbReference type="RefSeq" id="NP_196613.2">
    <property type="nucleotide sequence ID" value="NM_121089.3"/>
</dbReference>
<dbReference type="SMR" id="Q52QU2"/>
<dbReference type="BioGRID" id="16193">
    <property type="interactions" value="2"/>
</dbReference>
<dbReference type="FunCoup" id="Q52QU2">
    <property type="interactions" value="224"/>
</dbReference>
<dbReference type="IntAct" id="Q52QU2">
    <property type="interactions" value="2"/>
</dbReference>
<dbReference type="STRING" id="3702.Q52QU2"/>
<dbReference type="PaxDb" id="3702-AT5G10510.3"/>
<dbReference type="ProteomicsDB" id="244920">
    <molecule id="Q52QU2-1"/>
</dbReference>
<dbReference type="EnsemblPlants" id="AT5G10510.4">
    <molecule id="Q52QU2-2"/>
    <property type="protein sequence ID" value="AT5G10510.4"/>
    <property type="gene ID" value="AT5G10510"/>
</dbReference>
<dbReference type="EnsemblPlants" id="AT5G10510.6">
    <molecule id="Q52QU2-2"/>
    <property type="protein sequence ID" value="AT5G10510.6"/>
    <property type="gene ID" value="AT5G10510"/>
</dbReference>
<dbReference type="GeneID" id="830915"/>
<dbReference type="Gramene" id="AT5G10510.4">
    <molecule id="Q52QU2-2"/>
    <property type="protein sequence ID" value="AT5G10510.4"/>
    <property type="gene ID" value="AT5G10510"/>
</dbReference>
<dbReference type="Gramene" id="AT5G10510.6">
    <molecule id="Q52QU2-2"/>
    <property type="protein sequence ID" value="AT5G10510.6"/>
    <property type="gene ID" value="AT5G10510"/>
</dbReference>
<dbReference type="KEGG" id="ath:AT5G10510"/>
<dbReference type="Araport" id="AT5G10510"/>
<dbReference type="TAIR" id="AT5G10510">
    <property type="gene designation" value="AIL6"/>
</dbReference>
<dbReference type="eggNOG" id="ENOG502QWA0">
    <property type="taxonomic scope" value="Eukaryota"/>
</dbReference>
<dbReference type="HOGENOM" id="CLU_013549_4_0_1"/>
<dbReference type="InParanoid" id="Q52QU2"/>
<dbReference type="OMA" id="HYFLDNF"/>
<dbReference type="PhylomeDB" id="Q52QU2"/>
<dbReference type="PRO" id="PR:Q52QU2"/>
<dbReference type="Proteomes" id="UP000006548">
    <property type="component" value="Chromosome 5"/>
</dbReference>
<dbReference type="ExpressionAtlas" id="Q52QU2">
    <property type="expression patterns" value="baseline and differential"/>
</dbReference>
<dbReference type="GO" id="GO:0005634">
    <property type="term" value="C:nucleus"/>
    <property type="evidence" value="ECO:0007669"/>
    <property type="project" value="UniProtKB-SubCell"/>
</dbReference>
<dbReference type="GO" id="GO:0003677">
    <property type="term" value="F:DNA binding"/>
    <property type="evidence" value="ECO:0007669"/>
    <property type="project" value="UniProtKB-KW"/>
</dbReference>
<dbReference type="GO" id="GO:0003700">
    <property type="term" value="F:DNA-binding transcription factor activity"/>
    <property type="evidence" value="ECO:0007669"/>
    <property type="project" value="InterPro"/>
</dbReference>
<dbReference type="GO" id="GO:0009873">
    <property type="term" value="P:ethylene-activated signaling pathway"/>
    <property type="evidence" value="ECO:0007669"/>
    <property type="project" value="UniProtKB-KW"/>
</dbReference>
<dbReference type="CDD" id="cd00018">
    <property type="entry name" value="AP2"/>
    <property type="match status" value="2"/>
</dbReference>
<dbReference type="FunFam" id="3.30.730.10:FF:000002">
    <property type="entry name" value="AP2-like ethylene-responsive transcription factor"/>
    <property type="match status" value="1"/>
</dbReference>
<dbReference type="FunFam" id="3.30.730.10:FF:000003">
    <property type="entry name" value="AP2-like ethylene-responsive transcription factor ANT"/>
    <property type="match status" value="1"/>
</dbReference>
<dbReference type="Gene3D" id="3.30.730.10">
    <property type="entry name" value="AP2/ERF domain"/>
    <property type="match status" value="2"/>
</dbReference>
<dbReference type="InterPro" id="IPR001471">
    <property type="entry name" value="AP2/ERF_dom"/>
</dbReference>
<dbReference type="InterPro" id="IPR036955">
    <property type="entry name" value="AP2/ERF_dom_sf"/>
</dbReference>
<dbReference type="InterPro" id="IPR016177">
    <property type="entry name" value="DNA-bd_dom_sf"/>
</dbReference>
<dbReference type="PANTHER" id="PTHR32467">
    <property type="entry name" value="AP2-LIKE ETHYLENE-RESPONSIVE TRANSCRIPTION FACTOR"/>
    <property type="match status" value="1"/>
</dbReference>
<dbReference type="PANTHER" id="PTHR32467:SF101">
    <property type="entry name" value="AP2-LIKE ETHYLENE-RESPONSIVE TRANSCRIPTION FACTOR AIL6"/>
    <property type="match status" value="1"/>
</dbReference>
<dbReference type="Pfam" id="PF00847">
    <property type="entry name" value="AP2"/>
    <property type="match status" value="1"/>
</dbReference>
<dbReference type="PRINTS" id="PR00367">
    <property type="entry name" value="ETHRSPELEMNT"/>
</dbReference>
<dbReference type="SMART" id="SM00380">
    <property type="entry name" value="AP2"/>
    <property type="match status" value="2"/>
</dbReference>
<dbReference type="SUPFAM" id="SSF54171">
    <property type="entry name" value="DNA-binding domain"/>
    <property type="match status" value="2"/>
</dbReference>
<dbReference type="PROSITE" id="PS51032">
    <property type="entry name" value="AP2_ERF"/>
    <property type="match status" value="2"/>
</dbReference>
<sequence>MMAPMTNWLTFSLSPMEMLRSSDQSQFVSYDASSAASSSPYLLDNFYGWSNQKPQEFFKEEAQLAAAASMADSTILTTFVDPQSHHSQNHIPKLEDFLGDSSSIVRYSDNSQTDTQDSSLTQIYDPRHHHNQTGFYSDHHDFKTMAGFQSAFSTNSGSEVDDSASIGRTHLAGDYLGHVVESSGPELGFHGGSTGALSLGVNVNNNTNHRNDNDNHYRGNNNGERINNNNNNDNEKTDSEKEKAVVAVETSDCSNKKIADTFGQRTSIYRGVTRHRWTGRYEAHLWDNSCRREGQARKGRQGGYDKEDKAARAYDLAALKYWNATATTNFPITNYSKEVEEMKHMTKQEFIASLRRKSSGFSRGASIYRGVTRHHQQGRWQARIGRVAGNKDLYLGTFATEEEAAEAYDIAAIKFRGINAVTNFEMNRYDVEAIMKSALPIGGAAKRLKLSLEAAASSEQKPILGHHQLHHFQQQQQQQQLQLQSSPNHSSINFALCPNSAVQSQQIIPCGIPFEAAALYHHHQQQQQHQQQQQQQNFFQHFPANAASDSTGSNNNSNVQGTMGLMAPNPAEFFLWPNQSY</sequence>
<evidence type="ECO:0000250" key="1">
    <source>
        <dbReference type="UniProtKB" id="Q9LND1"/>
    </source>
</evidence>
<evidence type="ECO:0000255" key="2">
    <source>
        <dbReference type="PROSITE-ProRule" id="PRU00366"/>
    </source>
</evidence>
<evidence type="ECO:0000256" key="3">
    <source>
        <dbReference type="SAM" id="MobiDB-lite"/>
    </source>
</evidence>
<evidence type="ECO:0000269" key="4">
    <source>
    </source>
</evidence>
<evidence type="ECO:0000269" key="5">
    <source>
    </source>
</evidence>
<evidence type="ECO:0000303" key="6">
    <source>
    </source>
</evidence>
<evidence type="ECO:0000303" key="7">
    <source ref="4"/>
</evidence>
<evidence type="ECO:0000305" key="8"/>
<evidence type="ECO:0000312" key="9">
    <source>
        <dbReference type="Araport" id="AT5G10510"/>
    </source>
</evidence>
<evidence type="ECO:0000312" key="10">
    <source>
        <dbReference type="EMBL" id="CAB89392.1"/>
    </source>
</evidence>
<proteinExistence type="evidence at transcript level"/>